<organism>
    <name type="scientific">Mus musculus</name>
    <name type="common">Mouse</name>
    <dbReference type="NCBI Taxonomy" id="10090"/>
    <lineage>
        <taxon>Eukaryota</taxon>
        <taxon>Metazoa</taxon>
        <taxon>Chordata</taxon>
        <taxon>Craniata</taxon>
        <taxon>Vertebrata</taxon>
        <taxon>Euteleostomi</taxon>
        <taxon>Mammalia</taxon>
        <taxon>Eutheria</taxon>
        <taxon>Euarchontoglires</taxon>
        <taxon>Glires</taxon>
        <taxon>Rodentia</taxon>
        <taxon>Myomorpha</taxon>
        <taxon>Muroidea</taxon>
        <taxon>Muridae</taxon>
        <taxon>Murinae</taxon>
        <taxon>Mus</taxon>
        <taxon>Mus</taxon>
    </lineage>
</organism>
<protein>
    <recommendedName>
        <fullName evidence="13">Patatin-like phospholipase domain-containing protein 6</fullName>
    </recommendedName>
    <alternativeName>
        <fullName>Neuropathy target esterase</fullName>
        <ecNumber evidence="9 15">3.1.1.5</ecNumber>
    </alternativeName>
</protein>
<keyword id="KW-0025">Alternative splicing</keyword>
<keyword id="KW-0256">Endoplasmic reticulum</keyword>
<keyword id="KW-0325">Glycoprotein</keyword>
<keyword id="KW-0378">Hydrolase</keyword>
<keyword id="KW-0442">Lipid degradation</keyword>
<keyword id="KW-0443">Lipid metabolism</keyword>
<keyword id="KW-0472">Membrane</keyword>
<keyword id="KW-0597">Phosphoprotein</keyword>
<keyword id="KW-1185">Reference proteome</keyword>
<keyword id="KW-0677">Repeat</keyword>
<keyword id="KW-0812">Transmembrane</keyword>
<keyword id="KW-1133">Transmembrane helix</keyword>
<evidence type="ECO:0000250" key="1"/>
<evidence type="ECO:0000250" key="2">
    <source>
        <dbReference type="UniProtKB" id="Q8IY17"/>
    </source>
</evidence>
<evidence type="ECO:0000255" key="3"/>
<evidence type="ECO:0000255" key="4">
    <source>
        <dbReference type="PROSITE-ProRule" id="PRU01161"/>
    </source>
</evidence>
<evidence type="ECO:0000256" key="5">
    <source>
        <dbReference type="SAM" id="MobiDB-lite"/>
    </source>
</evidence>
<evidence type="ECO:0000269" key="6">
    <source>
    </source>
</evidence>
<evidence type="ECO:0000269" key="7">
    <source>
    </source>
</evidence>
<evidence type="ECO:0000269" key="8">
    <source>
    </source>
</evidence>
<evidence type="ECO:0000269" key="9">
    <source>
    </source>
</evidence>
<evidence type="ECO:0000303" key="10">
    <source>
    </source>
</evidence>
<evidence type="ECO:0000303" key="11">
    <source>
    </source>
</evidence>
<evidence type="ECO:0000303" key="12">
    <source>
    </source>
</evidence>
<evidence type="ECO:0000305" key="13"/>
<evidence type="ECO:0000305" key="14">
    <source>
    </source>
</evidence>
<evidence type="ECO:0000305" key="15">
    <source>
    </source>
</evidence>
<name>PLPL6_MOUSE</name>
<feature type="chain" id="PRO_0000292200" description="Patatin-like phospholipase domain-containing protein 6">
    <location>
        <begin position="1"/>
        <end position="1355"/>
    </location>
</feature>
<feature type="topological domain" description="Lumenal" evidence="3">
    <location>
        <begin position="1"/>
        <end position="43"/>
    </location>
</feature>
<feature type="transmembrane region" description="Helical" evidence="3">
    <location>
        <begin position="44"/>
        <end position="64"/>
    </location>
</feature>
<feature type="topological domain" description="Cytoplasmic" evidence="3">
    <location>
        <begin position="65"/>
        <end position="1355"/>
    </location>
</feature>
<feature type="domain" description="PNPLA" evidence="4">
    <location>
        <begin position="961"/>
        <end position="1127"/>
    </location>
</feature>
<feature type="region of interest" description="Disordered" evidence="5">
    <location>
        <begin position="338"/>
        <end position="395"/>
    </location>
</feature>
<feature type="region of interest" description="Disordered" evidence="5">
    <location>
        <begin position="1286"/>
        <end position="1355"/>
    </location>
</feature>
<feature type="short sequence motif" description="GXGXXG" evidence="4">
    <location>
        <begin position="965"/>
        <end position="970"/>
    </location>
</feature>
<feature type="short sequence motif" description="GXSXG" evidence="4">
    <location>
        <begin position="992"/>
        <end position="996"/>
    </location>
</feature>
<feature type="short sequence motif" description="DGA/G" evidence="4">
    <location>
        <begin position="1114"/>
        <end position="1116"/>
    </location>
</feature>
<feature type="compositionally biased region" description="Polar residues" evidence="5">
    <location>
        <begin position="343"/>
        <end position="361"/>
    </location>
</feature>
<feature type="compositionally biased region" description="Acidic residues" evidence="5">
    <location>
        <begin position="1293"/>
        <end position="1309"/>
    </location>
</feature>
<feature type="active site" description="Nucleophile" evidence="4">
    <location>
        <position position="994"/>
    </location>
</feature>
<feature type="active site" description="Proton acceptor" evidence="4">
    <location>
        <position position="1114"/>
    </location>
</feature>
<feature type="binding site">
    <location>
        <begin position="179"/>
        <end position="306"/>
    </location>
    <ligand>
        <name>a nucleoside 3',5'-cyclic phosphate</name>
        <dbReference type="ChEBI" id="CHEBI:58464"/>
        <label>1</label>
    </ligand>
</feature>
<feature type="binding site">
    <location>
        <begin position="492"/>
        <end position="614"/>
    </location>
    <ligand>
        <name>a nucleoside 3',5'-cyclic phosphate</name>
        <dbReference type="ChEBI" id="CHEBI:58464"/>
        <label>2</label>
    </ligand>
</feature>
<feature type="binding site">
    <location>
        <begin position="610"/>
        <end position="730"/>
    </location>
    <ligand>
        <name>a nucleoside 3',5'-cyclic phosphate</name>
        <dbReference type="ChEBI" id="CHEBI:58464"/>
        <label>3</label>
    </ligand>
</feature>
<feature type="modified residue" description="Phosphoserine" evidence="2">
    <location>
        <position position="338"/>
    </location>
</feature>
<feature type="modified residue" description="Phosphothreonine" evidence="2">
    <location>
        <position position="345"/>
    </location>
</feature>
<feature type="modified residue" description="Phosphoserine" evidence="2">
    <location>
        <position position="346"/>
    </location>
</feature>
<feature type="modified residue" description="Phosphoserine" evidence="2">
    <location>
        <position position="356"/>
    </location>
</feature>
<feature type="modified residue" description="Phosphoserine" evidence="2">
    <location>
        <position position="405"/>
    </location>
</feature>
<feature type="glycosylation site" description="N-linked (GlcNAc...) asparagine" evidence="3">
    <location>
        <position position="9"/>
    </location>
</feature>
<feature type="splice variant" id="VSP_026390" description="In isoform 2 and isoform 3." evidence="10 11">
    <original>MGTPSHELNTTSSGAEVIQKTLEEGLGRRICVAQPVPFVPQ</original>
    <variation>MEAPLQTGM</variation>
    <location>
        <begin position="1"/>
        <end position="41"/>
    </location>
</feature>
<feature type="splice variant" id="VSP_026391" description="In isoform 3." evidence="10">
    <original>R</original>
    <variation>RTPTQ</variation>
    <location>
        <position position="448"/>
    </location>
</feature>
<feature type="splice variant" id="VSP_026392" description="In isoform 4." evidence="12">
    <original>ADIARSMGAKTVIAIDVGSQDETDLSTYGDSLSGWWLLWKRLNPWAD</original>
    <variation>GKWLPTHICMDTYHQTHAHTDFCTCRLEGTGLYEWRSSRGHTQLCTEL</variation>
    <location>
        <begin position="1123"/>
        <end position="1169"/>
    </location>
</feature>
<feature type="splice variant" id="VSP_026393" description="In isoform 4." evidence="12">
    <location>
        <begin position="1170"/>
        <end position="1355"/>
    </location>
</feature>
<feature type="sequence conflict" description="In Ref. 1; AAD51700." evidence="13" ref="1">
    <original>E</original>
    <variation>K</variation>
    <location>
        <position position="240"/>
    </location>
</feature>
<gene>
    <name type="primary">Pnpla6</name>
    <name type="synonym">Nte</name>
</gene>
<reference key="1">
    <citation type="journal article" date="2000" name="Mech. Dev.">
        <title>Cloning and expression of the murine sws/NTE gene.</title>
        <authorList>
            <person name="Moser M."/>
            <person name="Stempfl T."/>
            <person name="Li Y."/>
            <person name="Glynn P."/>
            <person name="Buttner R."/>
            <person name="Kretzschmar D."/>
        </authorList>
    </citation>
    <scope>NUCLEOTIDE SEQUENCE [MRNA] (ISOFORM 3)</scope>
    <scope>TISSUE SPECIFICITY</scope>
    <scope>DEVELOPMENTAL STAGE</scope>
    <source>
        <strain>BALB/cJ</strain>
    </source>
</reference>
<reference key="2">
    <citation type="journal article" date="2005" name="Science">
        <title>The transcriptional landscape of the mammalian genome.</title>
        <authorList>
            <person name="Carninci P."/>
            <person name="Kasukawa T."/>
            <person name="Katayama S."/>
            <person name="Gough J."/>
            <person name="Frith M.C."/>
            <person name="Maeda N."/>
            <person name="Oyama R."/>
            <person name="Ravasi T."/>
            <person name="Lenhard B."/>
            <person name="Wells C."/>
            <person name="Kodzius R."/>
            <person name="Shimokawa K."/>
            <person name="Bajic V.B."/>
            <person name="Brenner S.E."/>
            <person name="Batalov S."/>
            <person name="Forrest A.R."/>
            <person name="Zavolan M."/>
            <person name="Davis M.J."/>
            <person name="Wilming L.G."/>
            <person name="Aidinis V."/>
            <person name="Allen J.E."/>
            <person name="Ambesi-Impiombato A."/>
            <person name="Apweiler R."/>
            <person name="Aturaliya R.N."/>
            <person name="Bailey T.L."/>
            <person name="Bansal M."/>
            <person name="Baxter L."/>
            <person name="Beisel K.W."/>
            <person name="Bersano T."/>
            <person name="Bono H."/>
            <person name="Chalk A.M."/>
            <person name="Chiu K.P."/>
            <person name="Choudhary V."/>
            <person name="Christoffels A."/>
            <person name="Clutterbuck D.R."/>
            <person name="Crowe M.L."/>
            <person name="Dalla E."/>
            <person name="Dalrymple B.P."/>
            <person name="de Bono B."/>
            <person name="Della Gatta G."/>
            <person name="di Bernardo D."/>
            <person name="Down T."/>
            <person name="Engstrom P."/>
            <person name="Fagiolini M."/>
            <person name="Faulkner G."/>
            <person name="Fletcher C.F."/>
            <person name="Fukushima T."/>
            <person name="Furuno M."/>
            <person name="Futaki S."/>
            <person name="Gariboldi M."/>
            <person name="Georgii-Hemming P."/>
            <person name="Gingeras T.R."/>
            <person name="Gojobori T."/>
            <person name="Green R.E."/>
            <person name="Gustincich S."/>
            <person name="Harbers M."/>
            <person name="Hayashi Y."/>
            <person name="Hensch T.K."/>
            <person name="Hirokawa N."/>
            <person name="Hill D."/>
            <person name="Huminiecki L."/>
            <person name="Iacono M."/>
            <person name="Ikeo K."/>
            <person name="Iwama A."/>
            <person name="Ishikawa T."/>
            <person name="Jakt M."/>
            <person name="Kanapin A."/>
            <person name="Katoh M."/>
            <person name="Kawasawa Y."/>
            <person name="Kelso J."/>
            <person name="Kitamura H."/>
            <person name="Kitano H."/>
            <person name="Kollias G."/>
            <person name="Krishnan S.P."/>
            <person name="Kruger A."/>
            <person name="Kummerfeld S.K."/>
            <person name="Kurochkin I.V."/>
            <person name="Lareau L.F."/>
            <person name="Lazarevic D."/>
            <person name="Lipovich L."/>
            <person name="Liu J."/>
            <person name="Liuni S."/>
            <person name="McWilliam S."/>
            <person name="Madan Babu M."/>
            <person name="Madera M."/>
            <person name="Marchionni L."/>
            <person name="Matsuda H."/>
            <person name="Matsuzawa S."/>
            <person name="Miki H."/>
            <person name="Mignone F."/>
            <person name="Miyake S."/>
            <person name="Morris K."/>
            <person name="Mottagui-Tabar S."/>
            <person name="Mulder N."/>
            <person name="Nakano N."/>
            <person name="Nakauchi H."/>
            <person name="Ng P."/>
            <person name="Nilsson R."/>
            <person name="Nishiguchi S."/>
            <person name="Nishikawa S."/>
            <person name="Nori F."/>
            <person name="Ohara O."/>
            <person name="Okazaki Y."/>
            <person name="Orlando V."/>
            <person name="Pang K.C."/>
            <person name="Pavan W.J."/>
            <person name="Pavesi G."/>
            <person name="Pesole G."/>
            <person name="Petrovsky N."/>
            <person name="Piazza S."/>
            <person name="Reed J."/>
            <person name="Reid J.F."/>
            <person name="Ring B.Z."/>
            <person name="Ringwald M."/>
            <person name="Rost B."/>
            <person name="Ruan Y."/>
            <person name="Salzberg S.L."/>
            <person name="Sandelin A."/>
            <person name="Schneider C."/>
            <person name="Schoenbach C."/>
            <person name="Sekiguchi K."/>
            <person name="Semple C.A."/>
            <person name="Seno S."/>
            <person name="Sessa L."/>
            <person name="Sheng Y."/>
            <person name="Shibata Y."/>
            <person name="Shimada H."/>
            <person name="Shimada K."/>
            <person name="Silva D."/>
            <person name="Sinclair B."/>
            <person name="Sperling S."/>
            <person name="Stupka E."/>
            <person name="Sugiura K."/>
            <person name="Sultana R."/>
            <person name="Takenaka Y."/>
            <person name="Taki K."/>
            <person name="Tammoja K."/>
            <person name="Tan S.L."/>
            <person name="Tang S."/>
            <person name="Taylor M.S."/>
            <person name="Tegner J."/>
            <person name="Teichmann S.A."/>
            <person name="Ueda H.R."/>
            <person name="van Nimwegen E."/>
            <person name="Verardo R."/>
            <person name="Wei C.L."/>
            <person name="Yagi K."/>
            <person name="Yamanishi H."/>
            <person name="Zabarovsky E."/>
            <person name="Zhu S."/>
            <person name="Zimmer A."/>
            <person name="Hide W."/>
            <person name="Bult C."/>
            <person name="Grimmond S.M."/>
            <person name="Teasdale R.D."/>
            <person name="Liu E.T."/>
            <person name="Brusic V."/>
            <person name="Quackenbush J."/>
            <person name="Wahlestedt C."/>
            <person name="Mattick J.S."/>
            <person name="Hume D.A."/>
            <person name="Kai C."/>
            <person name="Sasaki D."/>
            <person name="Tomaru Y."/>
            <person name="Fukuda S."/>
            <person name="Kanamori-Katayama M."/>
            <person name="Suzuki M."/>
            <person name="Aoki J."/>
            <person name="Arakawa T."/>
            <person name="Iida J."/>
            <person name="Imamura K."/>
            <person name="Itoh M."/>
            <person name="Kato T."/>
            <person name="Kawaji H."/>
            <person name="Kawagashira N."/>
            <person name="Kawashima T."/>
            <person name="Kojima M."/>
            <person name="Kondo S."/>
            <person name="Konno H."/>
            <person name="Nakano K."/>
            <person name="Ninomiya N."/>
            <person name="Nishio T."/>
            <person name="Okada M."/>
            <person name="Plessy C."/>
            <person name="Shibata K."/>
            <person name="Shiraki T."/>
            <person name="Suzuki S."/>
            <person name="Tagami M."/>
            <person name="Waki K."/>
            <person name="Watahiki A."/>
            <person name="Okamura-Oho Y."/>
            <person name="Suzuki H."/>
            <person name="Kawai J."/>
            <person name="Hayashizaki Y."/>
        </authorList>
    </citation>
    <scope>NUCLEOTIDE SEQUENCE [LARGE SCALE MRNA] (ISOFORM 4)</scope>
    <source>
        <strain>C57BL/6J</strain>
        <tissue>Bone</tissue>
    </source>
</reference>
<reference key="3">
    <citation type="journal article" date="2009" name="PLoS Biol.">
        <title>Lineage-specific biology revealed by a finished genome assembly of the mouse.</title>
        <authorList>
            <person name="Church D.M."/>
            <person name="Goodstadt L."/>
            <person name="Hillier L.W."/>
            <person name="Zody M.C."/>
            <person name="Goldstein S."/>
            <person name="She X."/>
            <person name="Bult C.J."/>
            <person name="Agarwala R."/>
            <person name="Cherry J.L."/>
            <person name="DiCuccio M."/>
            <person name="Hlavina W."/>
            <person name="Kapustin Y."/>
            <person name="Meric P."/>
            <person name="Maglott D."/>
            <person name="Birtle Z."/>
            <person name="Marques A.C."/>
            <person name="Graves T."/>
            <person name="Zhou S."/>
            <person name="Teague B."/>
            <person name="Potamousis K."/>
            <person name="Churas C."/>
            <person name="Place M."/>
            <person name="Herschleb J."/>
            <person name="Runnheim R."/>
            <person name="Forrest D."/>
            <person name="Amos-Landgraf J."/>
            <person name="Schwartz D.C."/>
            <person name="Cheng Z."/>
            <person name="Lindblad-Toh K."/>
            <person name="Eichler E.E."/>
            <person name="Ponting C.P."/>
        </authorList>
    </citation>
    <scope>NUCLEOTIDE SEQUENCE [LARGE SCALE GENOMIC DNA]</scope>
    <source>
        <strain>C57BL/6J</strain>
    </source>
</reference>
<reference key="4">
    <citation type="journal article" date="2004" name="Genome Res.">
        <title>The status, quality, and expansion of the NIH full-length cDNA project: the Mammalian Gene Collection (MGC).</title>
        <authorList>
            <consortium name="The MGC Project Team"/>
        </authorList>
    </citation>
    <scope>NUCLEOTIDE SEQUENCE [LARGE SCALE MRNA] (ISOFORM 2)</scope>
    <source>
        <strain>C57BL/6J</strain>
        <tissue>Brain</tissue>
    </source>
</reference>
<reference key="5">
    <citation type="journal article" date="2003" name="Nat. Genet.">
        <title>Loss of neuropathy target esterase in mice links organophosphate exposure to hyperactivity.</title>
        <authorList>
            <person name="Winrow C.J."/>
            <person name="Hemming M.L."/>
            <person name="Allen D.M."/>
            <person name="Quistad G.B."/>
            <person name="Casida J.E."/>
            <person name="Barlow C."/>
        </authorList>
    </citation>
    <scope>TISSUE SPECIFICITY</scope>
    <scope>DISRUPTION PHENOTYPE</scope>
</reference>
<reference key="6">
    <citation type="journal article" date="2007" name="Toxicol. Appl. Pharmacol.">
        <title>Phospholipase B activity and organophosphorus compound toxicity in cultured neural cells.</title>
        <authorList>
            <person name="Read D.J."/>
            <person name="Langford L."/>
            <person name="Barbour H.R."/>
            <person name="Forshaw P.J."/>
            <person name="Glynn P."/>
        </authorList>
    </citation>
    <scope>FUNCTION</scope>
    <scope>CATALYTIC ACTIVITY</scope>
    <scope>ACTIVITY REGULATION</scope>
    <scope>SUBCELLULAR LOCATION</scope>
</reference>
<reference key="7">
    <citation type="journal article" date="2008" name="J. Biol. Chem.">
        <title>Identification of an insulin-regulated lysophospholipase with homology to neuropathy target esterase.</title>
        <authorList>
            <person name="Kienesberger P.C."/>
            <person name="Lass A."/>
            <person name="Preiss-Landl K."/>
            <person name="Wolinski H."/>
            <person name="Kohlwein S.D."/>
            <person name="Zimmermann R."/>
            <person name="Zechner R."/>
        </authorList>
    </citation>
    <scope>FUNCTION</scope>
    <scope>CATALYTIC ACTIVITY</scope>
    <scope>BIOPHYSICOCHEMICAL PROPERTIES</scope>
</reference>
<reference key="8">
    <citation type="journal article" date="2010" name="Cell">
        <title>A tissue-specific atlas of mouse protein phosphorylation and expression.</title>
        <authorList>
            <person name="Huttlin E.L."/>
            <person name="Jedrychowski M.P."/>
            <person name="Elias J.E."/>
            <person name="Goswami T."/>
            <person name="Rad R."/>
            <person name="Beausoleil S.A."/>
            <person name="Villen J."/>
            <person name="Haas W."/>
            <person name="Sowa M.E."/>
            <person name="Gygi S.P."/>
        </authorList>
    </citation>
    <scope>IDENTIFICATION BY MASS SPECTROMETRY [LARGE SCALE ANALYSIS]</scope>
    <source>
        <tissue>Brain</tissue>
        <tissue>Brown adipose tissue</tissue>
        <tissue>Kidney</tissue>
        <tissue>Lung</tissue>
        <tissue>Spleen</tissue>
        <tissue>Testis</tissue>
    </source>
</reference>
<dbReference type="EC" id="3.1.1.5" evidence="9 15"/>
<dbReference type="EMBL" id="AF173829">
    <property type="protein sequence ID" value="AAD51700.1"/>
    <property type="molecule type" value="mRNA"/>
</dbReference>
<dbReference type="EMBL" id="AK162641">
    <property type="protein sequence ID" value="BAE37004.1"/>
    <property type="molecule type" value="mRNA"/>
</dbReference>
<dbReference type="EMBL" id="AC170806">
    <property type="status" value="NOT_ANNOTATED_CDS"/>
    <property type="molecule type" value="Genomic_DNA"/>
</dbReference>
<dbReference type="EMBL" id="BC054789">
    <property type="protein sequence ID" value="AAH54789.1"/>
    <property type="molecule type" value="mRNA"/>
</dbReference>
<dbReference type="EMBL" id="BC056999">
    <property type="protein sequence ID" value="AAH56999.1"/>
    <property type="molecule type" value="mRNA"/>
</dbReference>
<dbReference type="CCDS" id="CCDS40206.1">
    <molecule id="Q3TRM4-3"/>
</dbReference>
<dbReference type="RefSeq" id="NP_001116290.2">
    <property type="nucleotide sequence ID" value="NM_001122818.2"/>
</dbReference>
<dbReference type="RefSeq" id="NP_001346050.1">
    <molecule id="Q3TRM4-2"/>
    <property type="nucleotide sequence ID" value="NM_001359121.2"/>
</dbReference>
<dbReference type="RefSeq" id="NP_001365881.1">
    <molecule id="Q3TRM4-2"/>
    <property type="nucleotide sequence ID" value="NM_001378952.1"/>
</dbReference>
<dbReference type="RefSeq" id="NP_001365882.1">
    <molecule id="Q3TRM4-1"/>
    <property type="nucleotide sequence ID" value="NM_001378953.1"/>
</dbReference>
<dbReference type="RefSeq" id="NP_056616.2">
    <molecule id="Q3TRM4-3"/>
    <property type="nucleotide sequence ID" value="NM_015801.3"/>
</dbReference>
<dbReference type="RefSeq" id="XP_006508887.1">
    <property type="nucleotide sequence ID" value="XM_006508824.3"/>
</dbReference>
<dbReference type="RefSeq" id="XP_006508888.2">
    <property type="nucleotide sequence ID" value="XM_006508825.3"/>
</dbReference>
<dbReference type="RefSeq" id="XP_006508893.2">
    <property type="nucleotide sequence ID" value="XM_006508830.3"/>
</dbReference>
<dbReference type="RefSeq" id="XP_017168379.1">
    <property type="nucleotide sequence ID" value="XM_017312890.1"/>
</dbReference>
<dbReference type="SMR" id="Q3TRM4"/>
<dbReference type="BioGRID" id="206099">
    <property type="interactions" value="7"/>
</dbReference>
<dbReference type="FunCoup" id="Q3TRM4">
    <property type="interactions" value="1819"/>
</dbReference>
<dbReference type="STRING" id="10090.ENSMUSP00000146680"/>
<dbReference type="ChEMBL" id="CHEMBL3259506"/>
<dbReference type="SwissLipids" id="SLP:000001979"/>
<dbReference type="GlyConnect" id="2555">
    <property type="glycosylation" value="1 N-Linked glycan (1 site)"/>
</dbReference>
<dbReference type="GlyCosmos" id="Q3TRM4">
    <property type="glycosylation" value="1 site, 1 glycan"/>
</dbReference>
<dbReference type="GlyGen" id="Q3TRM4">
    <property type="glycosylation" value="3 sites, 2 N-linked glycans (1 site), 1 O-linked glycan (1 site)"/>
</dbReference>
<dbReference type="iPTMnet" id="Q3TRM4"/>
<dbReference type="PhosphoSitePlus" id="Q3TRM4"/>
<dbReference type="SwissPalm" id="Q3TRM4"/>
<dbReference type="jPOST" id="Q3TRM4"/>
<dbReference type="PaxDb" id="10090-ENSMUSP00000106699"/>
<dbReference type="PeptideAtlas" id="Q3TRM4"/>
<dbReference type="ProteomicsDB" id="289688">
    <molecule id="Q3TRM4-1"/>
</dbReference>
<dbReference type="ProteomicsDB" id="289689">
    <molecule id="Q3TRM4-2"/>
</dbReference>
<dbReference type="ProteomicsDB" id="289690">
    <molecule id="Q3TRM4-3"/>
</dbReference>
<dbReference type="ProteomicsDB" id="289691">
    <molecule id="Q3TRM4-4"/>
</dbReference>
<dbReference type="Pumba" id="Q3TRM4"/>
<dbReference type="Antibodypedia" id="2222">
    <property type="antibodies" value="240 antibodies from 30 providers"/>
</dbReference>
<dbReference type="DNASU" id="50767"/>
<dbReference type="Ensembl" id="ENSMUST00000004681.14">
    <molecule id="Q3TRM4-3"/>
    <property type="protein sequence ID" value="ENSMUSP00000004681.8"/>
    <property type="gene ID" value="ENSMUSG00000004565.16"/>
</dbReference>
<dbReference type="Ensembl" id="ENSMUST00000111070.4">
    <molecule id="Q3TRM4-3"/>
    <property type="protein sequence ID" value="ENSMUSP00000106699.3"/>
    <property type="gene ID" value="ENSMUSG00000004565.16"/>
</dbReference>
<dbReference type="GeneID" id="50767"/>
<dbReference type="KEGG" id="mmu:50767"/>
<dbReference type="UCSC" id="uc009krr.1">
    <molecule id="Q3TRM4-3"/>
    <property type="organism name" value="mouse"/>
</dbReference>
<dbReference type="UCSC" id="uc009krs.1">
    <molecule id="Q3TRM4-2"/>
    <property type="organism name" value="mouse"/>
</dbReference>
<dbReference type="UCSC" id="uc009krt.1">
    <molecule id="Q3TRM4-4"/>
    <property type="organism name" value="mouse"/>
</dbReference>
<dbReference type="UCSC" id="uc009kru.1">
    <molecule id="Q3TRM4-1"/>
    <property type="organism name" value="mouse"/>
</dbReference>
<dbReference type="AGR" id="MGI:1354723"/>
<dbReference type="CTD" id="10908"/>
<dbReference type="MGI" id="MGI:1354723">
    <property type="gene designation" value="Pnpla6"/>
</dbReference>
<dbReference type="VEuPathDB" id="HostDB:ENSMUSG00000004565"/>
<dbReference type="eggNOG" id="KOG2968">
    <property type="taxonomic scope" value="Eukaryota"/>
</dbReference>
<dbReference type="GeneTree" id="ENSGT00940000159130"/>
<dbReference type="HOGENOM" id="CLU_000960_1_0_1"/>
<dbReference type="InParanoid" id="Q3TRM4"/>
<dbReference type="OMA" id="GQQEDRH"/>
<dbReference type="OrthoDB" id="421051at2759"/>
<dbReference type="PhylomeDB" id="Q3TRM4"/>
<dbReference type="TreeFam" id="TF300519"/>
<dbReference type="Reactome" id="R-MMU-6814848">
    <property type="pathway name" value="Glycerophospholipid catabolism"/>
</dbReference>
<dbReference type="BioGRID-ORCS" id="50767">
    <property type="hits" value="6 hits in 79 CRISPR screens"/>
</dbReference>
<dbReference type="CD-CODE" id="CE726F99">
    <property type="entry name" value="Postsynaptic density"/>
</dbReference>
<dbReference type="PRO" id="PR:Q3TRM4"/>
<dbReference type="Proteomes" id="UP000000589">
    <property type="component" value="Chromosome 8"/>
</dbReference>
<dbReference type="RNAct" id="Q3TRM4">
    <property type="molecule type" value="protein"/>
</dbReference>
<dbReference type="Bgee" id="ENSMUSG00000004565">
    <property type="expression patterns" value="Expressed in retinal neural layer and 259 other cell types or tissues"/>
</dbReference>
<dbReference type="ExpressionAtlas" id="Q3TRM4">
    <property type="expression patterns" value="baseline and differential"/>
</dbReference>
<dbReference type="GO" id="GO:0005829">
    <property type="term" value="C:cytosol"/>
    <property type="evidence" value="ECO:0007669"/>
    <property type="project" value="Ensembl"/>
</dbReference>
<dbReference type="GO" id="GO:0005789">
    <property type="term" value="C:endoplasmic reticulum membrane"/>
    <property type="evidence" value="ECO:0007669"/>
    <property type="project" value="UniProtKB-SubCell"/>
</dbReference>
<dbReference type="GO" id="GO:0016020">
    <property type="term" value="C:membrane"/>
    <property type="evidence" value="ECO:0000314"/>
    <property type="project" value="UniProtKB"/>
</dbReference>
<dbReference type="GO" id="GO:0052689">
    <property type="term" value="F:carboxylic ester hydrolase activity"/>
    <property type="evidence" value="ECO:0000250"/>
    <property type="project" value="MGI"/>
</dbReference>
<dbReference type="GO" id="GO:0004622">
    <property type="term" value="F:lysophospholipase activity"/>
    <property type="evidence" value="ECO:0000314"/>
    <property type="project" value="UniProtKB"/>
</dbReference>
<dbReference type="GO" id="GO:0001525">
    <property type="term" value="P:angiogenesis"/>
    <property type="evidence" value="ECO:0000315"/>
    <property type="project" value="MGI"/>
</dbReference>
<dbReference type="GO" id="GO:0009887">
    <property type="term" value="P:animal organ morphogenesis"/>
    <property type="evidence" value="ECO:0000315"/>
    <property type="project" value="MGI"/>
</dbReference>
<dbReference type="GO" id="GO:0016042">
    <property type="term" value="P:lipid catabolic process"/>
    <property type="evidence" value="ECO:0007669"/>
    <property type="project" value="UniProtKB-KW"/>
</dbReference>
<dbReference type="GO" id="GO:0046470">
    <property type="term" value="P:phosphatidylcholine metabolic process"/>
    <property type="evidence" value="ECO:0007669"/>
    <property type="project" value="InterPro"/>
</dbReference>
<dbReference type="CDD" id="cd00038">
    <property type="entry name" value="CAP_ED"/>
    <property type="match status" value="3"/>
</dbReference>
<dbReference type="CDD" id="cd07225">
    <property type="entry name" value="Pat_PNPLA6_PNPLA7"/>
    <property type="match status" value="1"/>
</dbReference>
<dbReference type="FunFam" id="2.60.120.10:FF:000010">
    <property type="entry name" value="neuropathy target esterase isoform X1"/>
    <property type="match status" value="1"/>
</dbReference>
<dbReference type="FunFam" id="2.60.120.10:FF:000012">
    <property type="entry name" value="neuropathy target esterase isoform X2"/>
    <property type="match status" value="1"/>
</dbReference>
<dbReference type="FunFam" id="3.40.1090.10:FF:000001">
    <property type="entry name" value="neuropathy target esterase isoform X2"/>
    <property type="match status" value="1"/>
</dbReference>
<dbReference type="FunFam" id="2.60.120.10:FF:000022">
    <property type="entry name" value="Patatin like phospholipase domain containing 7"/>
    <property type="match status" value="1"/>
</dbReference>
<dbReference type="Gene3D" id="3.40.1090.10">
    <property type="entry name" value="Cytosolic phospholipase A2 catalytic domain"/>
    <property type="match status" value="1"/>
</dbReference>
<dbReference type="Gene3D" id="2.60.120.10">
    <property type="entry name" value="Jelly Rolls"/>
    <property type="match status" value="3"/>
</dbReference>
<dbReference type="InterPro" id="IPR016035">
    <property type="entry name" value="Acyl_Trfase/lysoPLipase"/>
</dbReference>
<dbReference type="InterPro" id="IPR000595">
    <property type="entry name" value="cNMP-bd_dom"/>
</dbReference>
<dbReference type="InterPro" id="IPR018490">
    <property type="entry name" value="cNMP-bd_dom_sf"/>
</dbReference>
<dbReference type="InterPro" id="IPR001423">
    <property type="entry name" value="LysoPLipase_patatin_CS"/>
</dbReference>
<dbReference type="InterPro" id="IPR050301">
    <property type="entry name" value="NTE"/>
</dbReference>
<dbReference type="InterPro" id="IPR056556">
    <property type="entry name" value="NTE1_P-loop_dom"/>
</dbReference>
<dbReference type="InterPro" id="IPR002641">
    <property type="entry name" value="PNPLA_dom"/>
</dbReference>
<dbReference type="InterPro" id="IPR014710">
    <property type="entry name" value="RmlC-like_jellyroll"/>
</dbReference>
<dbReference type="PANTHER" id="PTHR14226">
    <property type="entry name" value="NEUROPATHY TARGET ESTERASE/SWISS CHEESE D.MELANOGASTER"/>
    <property type="match status" value="1"/>
</dbReference>
<dbReference type="PANTHER" id="PTHR14226:SF26">
    <property type="entry name" value="PATATIN-LIKE PHOSPHOLIPASE DOMAIN-CONTAINING PROTEIN 6"/>
    <property type="match status" value="1"/>
</dbReference>
<dbReference type="Pfam" id="PF00027">
    <property type="entry name" value="cNMP_binding"/>
    <property type="match status" value="3"/>
</dbReference>
<dbReference type="Pfam" id="PF24179">
    <property type="entry name" value="NTE_Ploop"/>
    <property type="match status" value="1"/>
</dbReference>
<dbReference type="Pfam" id="PF01734">
    <property type="entry name" value="Patatin"/>
    <property type="match status" value="1"/>
</dbReference>
<dbReference type="SMART" id="SM00100">
    <property type="entry name" value="cNMP"/>
    <property type="match status" value="3"/>
</dbReference>
<dbReference type="SUPFAM" id="SSF51206">
    <property type="entry name" value="cAMP-binding domain-like"/>
    <property type="match status" value="3"/>
</dbReference>
<dbReference type="SUPFAM" id="SSF52151">
    <property type="entry name" value="FabD/lysophospholipase-like"/>
    <property type="match status" value="1"/>
</dbReference>
<dbReference type="PROSITE" id="PS50042">
    <property type="entry name" value="CNMP_BINDING_3"/>
    <property type="match status" value="3"/>
</dbReference>
<dbReference type="PROSITE" id="PS51635">
    <property type="entry name" value="PNPLA"/>
    <property type="match status" value="1"/>
</dbReference>
<dbReference type="PROSITE" id="PS01237">
    <property type="entry name" value="UPF0028"/>
    <property type="match status" value="1"/>
</dbReference>
<accession>Q3TRM4</accession>
<accession>Q7TQD6</accession>
<accession>Q9R114</accession>
<comment type="function">
    <text evidence="2 9 15">Phospholipase B that deacylates intracellular phosphatidylcholine (PtdCho), generating glycerophosphocholine (GroPtdCho) (Probable) (PubMed:18086666). This deacylation occurs at both sn-2 and sn-1 positions of PtdCho. Catalyzes the hydrolysis of several naturally occurring membrane-associated lipids. Hydrolyzes lysophospholipids and monoacylglycerols, preferring the 1-acyl to the 2-acyl isomer. Does not catalyze hydrolysis of di- or triacylglycerols or fatty acid amides (By similarity).</text>
</comment>
<comment type="catalytic activity">
    <reaction evidence="9 15">
        <text>a 1-acyl-sn-glycero-3-phosphocholine + H2O = sn-glycerol 3-phosphocholine + a fatty acid + H(+)</text>
        <dbReference type="Rhea" id="RHEA:15177"/>
        <dbReference type="ChEBI" id="CHEBI:15377"/>
        <dbReference type="ChEBI" id="CHEBI:15378"/>
        <dbReference type="ChEBI" id="CHEBI:16870"/>
        <dbReference type="ChEBI" id="CHEBI:28868"/>
        <dbReference type="ChEBI" id="CHEBI:58168"/>
        <dbReference type="EC" id="3.1.1.5"/>
    </reaction>
    <physiologicalReaction direction="left-to-right" evidence="9">
        <dbReference type="Rhea" id="RHEA:15178"/>
    </physiologicalReaction>
</comment>
<comment type="catalytic activity">
    <reaction evidence="9">
        <text>1-hexadecanoyl-sn-glycero-3-phosphocholine + H2O = sn-glycerol 3-phosphocholine + hexadecanoate + H(+)</text>
        <dbReference type="Rhea" id="RHEA:40435"/>
        <dbReference type="ChEBI" id="CHEBI:7896"/>
        <dbReference type="ChEBI" id="CHEBI:15377"/>
        <dbReference type="ChEBI" id="CHEBI:15378"/>
        <dbReference type="ChEBI" id="CHEBI:16870"/>
        <dbReference type="ChEBI" id="CHEBI:72998"/>
    </reaction>
    <physiologicalReaction direction="left-to-right" evidence="9">
        <dbReference type="Rhea" id="RHEA:40436"/>
    </physiologicalReaction>
</comment>
<comment type="catalytic activity">
    <reaction evidence="9">
        <text>1-hexadecanoyl-sn-glycero-3-phosphate + H2O = sn-glycerol 3-phosphate + hexadecanoate + H(+)</text>
        <dbReference type="Rhea" id="RHEA:49092"/>
        <dbReference type="ChEBI" id="CHEBI:7896"/>
        <dbReference type="ChEBI" id="CHEBI:15377"/>
        <dbReference type="ChEBI" id="CHEBI:15378"/>
        <dbReference type="ChEBI" id="CHEBI:57518"/>
        <dbReference type="ChEBI" id="CHEBI:57597"/>
    </reaction>
    <physiologicalReaction direction="left-to-right" evidence="9">
        <dbReference type="Rhea" id="RHEA:49093"/>
    </physiologicalReaction>
</comment>
<comment type="catalytic activity">
    <reaction evidence="2">
        <text>1-(9Z-octadecenoyl)-sn-glycero-3-phosphocholine + H2O = sn-glycerol 3-phosphocholine + (9Z)-octadecenoate + H(+)</text>
        <dbReference type="Rhea" id="RHEA:40807"/>
        <dbReference type="ChEBI" id="CHEBI:15377"/>
        <dbReference type="ChEBI" id="CHEBI:15378"/>
        <dbReference type="ChEBI" id="CHEBI:16870"/>
        <dbReference type="ChEBI" id="CHEBI:28610"/>
        <dbReference type="ChEBI" id="CHEBI:30823"/>
    </reaction>
    <physiologicalReaction direction="left-to-right" evidence="2">
        <dbReference type="Rhea" id="RHEA:40808"/>
    </physiologicalReaction>
</comment>
<comment type="catalytic activity">
    <reaction evidence="2">
        <text>1-hexadecanoylglycerol + H2O = glycerol + hexadecanoate + H(+)</text>
        <dbReference type="Rhea" id="RHEA:39959"/>
        <dbReference type="ChEBI" id="CHEBI:7896"/>
        <dbReference type="ChEBI" id="CHEBI:15377"/>
        <dbReference type="ChEBI" id="CHEBI:15378"/>
        <dbReference type="ChEBI" id="CHEBI:17754"/>
        <dbReference type="ChEBI" id="CHEBI:69081"/>
    </reaction>
    <physiologicalReaction direction="left-to-right" evidence="2">
        <dbReference type="Rhea" id="RHEA:39960"/>
    </physiologicalReaction>
</comment>
<comment type="catalytic activity">
    <reaction evidence="2">
        <text>2-hexadecanoylglycerol + H2O = glycerol + hexadecanoate + H(+)</text>
        <dbReference type="Rhea" id="RHEA:39963"/>
        <dbReference type="ChEBI" id="CHEBI:7896"/>
        <dbReference type="ChEBI" id="CHEBI:15377"/>
        <dbReference type="ChEBI" id="CHEBI:15378"/>
        <dbReference type="ChEBI" id="CHEBI:17754"/>
        <dbReference type="ChEBI" id="CHEBI:75455"/>
    </reaction>
    <physiologicalReaction direction="left-to-right" evidence="2">
        <dbReference type="Rhea" id="RHEA:39964"/>
    </physiologicalReaction>
</comment>
<comment type="catalytic activity">
    <reaction evidence="2">
        <text>1-(9Z-octadecenoyl)-glycerol + H2O = glycerol + (9Z)-octadecenoate + H(+)</text>
        <dbReference type="Rhea" id="RHEA:38487"/>
        <dbReference type="ChEBI" id="CHEBI:15377"/>
        <dbReference type="ChEBI" id="CHEBI:15378"/>
        <dbReference type="ChEBI" id="CHEBI:17754"/>
        <dbReference type="ChEBI" id="CHEBI:30823"/>
        <dbReference type="ChEBI" id="CHEBI:75342"/>
    </reaction>
    <physiologicalReaction direction="left-to-right" evidence="2">
        <dbReference type="Rhea" id="RHEA:38488"/>
    </physiologicalReaction>
</comment>
<comment type="catalytic activity">
    <reaction evidence="2">
        <text>2-(9Z-octadecenoyl)-glycerol + H2O = glycerol + (9Z)-octadecenoate + H(+)</text>
        <dbReference type="Rhea" id="RHEA:38491"/>
        <dbReference type="ChEBI" id="CHEBI:15377"/>
        <dbReference type="ChEBI" id="CHEBI:15378"/>
        <dbReference type="ChEBI" id="CHEBI:17754"/>
        <dbReference type="ChEBI" id="CHEBI:30823"/>
        <dbReference type="ChEBI" id="CHEBI:73990"/>
    </reaction>
    <physiologicalReaction direction="left-to-right" evidence="2">
        <dbReference type="Rhea" id="RHEA:38492"/>
    </physiologicalReaction>
</comment>
<comment type="catalytic activity">
    <reaction evidence="2">
        <text>2-(5Z,8Z,11Z,14Z-eicosatetraenoyl)-glycerol + H2O = glycerol + (5Z,8Z,11Z,14Z)-eicosatetraenoate + H(+)</text>
        <dbReference type="Rhea" id="RHEA:26132"/>
        <dbReference type="ChEBI" id="CHEBI:15377"/>
        <dbReference type="ChEBI" id="CHEBI:15378"/>
        <dbReference type="ChEBI" id="CHEBI:17754"/>
        <dbReference type="ChEBI" id="CHEBI:32395"/>
        <dbReference type="ChEBI" id="CHEBI:52392"/>
    </reaction>
    <physiologicalReaction direction="left-to-right" evidence="2">
        <dbReference type="Rhea" id="RHEA:26133"/>
    </physiologicalReaction>
</comment>
<comment type="activity regulation">
    <text evidence="8">Inhibited by a series a OPs such as mipafox (MPX), phenyl saligenin phosphate (PSP), phenyl dipentyl phosphinate (PDPP), diisopropyl fluorophosphate and paraoxon.</text>
</comment>
<comment type="biophysicochemical properties">
    <phDependence>
        <text evidence="9">Optimum pH is 8.5.</text>
    </phDependence>
</comment>
<comment type="subcellular location">
    <subcellularLocation>
        <location evidence="8">Endoplasmic reticulum membrane</location>
        <topology evidence="15">Single-pass type III membrane protein</topology>
    </subcellularLocation>
</comment>
<comment type="alternative products">
    <event type="alternative splicing"/>
    <isoform>
        <id>Q3TRM4-1</id>
        <name>1</name>
        <sequence type="displayed"/>
    </isoform>
    <isoform>
        <id>Q3TRM4-2</id>
        <name>2</name>
        <sequence type="described" ref="VSP_026390"/>
    </isoform>
    <isoform>
        <id>Q3TRM4-3</id>
        <name>3</name>
        <sequence type="described" ref="VSP_026390 VSP_026391"/>
    </isoform>
    <isoform>
        <id>Q3TRM4-4</id>
        <name>4</name>
        <sequence type="described" ref="VSP_026392 VSP_026393"/>
    </isoform>
</comment>
<comment type="tissue specificity">
    <text evidence="6 7">Expressed in brain, testes and kidney (at protein level) (PubMed:12640454). Expressed ubiquitously in brain of young mice (PubMed:10640712). Reaching adulthood, there is a most prominent expression in Purkinje cells, granule cells and pyramidal neurons of the hippocampus and some large neurons in the medulla oblongata, nucleus dentatus and pons (PubMed:10640712).</text>
</comment>
<comment type="developmental stage">
    <text evidence="6">Expressed in the embryonic respiratory system, different epithelial structures and strongly in the spinal ganglia, during the development.</text>
</comment>
<comment type="PTM">
    <text evidence="1">Glycosylated.</text>
</comment>
<comment type="disruption phenotype">
    <text evidence="7">Embryonically lethal. At 9 dpc, embryos are smaller, and their development is delayed (PubMed:12640454). At 10-11 dpc, the development is arrested with signs of resorption (PubMed:12640454). Heterozygous mice have lower catalytic activity towards the synthetic compound phenyl valerate in the brain and show increased motor activity (PubMed:12640454).</text>
</comment>
<comment type="miscellaneous">
    <text evidence="7 14">Specific chemical modification by some organophosphorus (OP) compounds leads to distal axonopathy in humans and chicken (Probable). The effects of these compounds in mice appear to be less severe (Probable). Mice treated with 1 mg/kg/body weight of ethyl octylphosphonofluoridate (EOPF) have elevated motor activity in the long term (PubMed:12640454). Higher doses result in increased mortality (PubMed:12640454).</text>
</comment>
<comment type="similarity">
    <text evidence="13">Belongs to the NTE family.</text>
</comment>
<proteinExistence type="evidence at protein level"/>
<sequence length="1355" mass="149537">MGTPSHELNTTSSGAEVIQKTLEEGLGRRICVAQPVPFVPQVLGVMIGAGVAVLVTAVLILLVVRRLRVQKTPAPEGPRYRFRKRDKVLFYGRKIMRKVSQSTSSLVDTSVSTTSRPRMKKKLKMLNIAKKILRIQKETPTLQRKEPPPSVLEADLTEGDLANSHLPSEVLYMLKNVRVLGHFEKPLFLELCRHMVFQRLGQGDYVFRPGQPDASIYVVQDGLLELCLPGPDGKECVVKEVVPGDSVNSLLSILDVITGHQHPQRTVSARAARDSTVLRLPVEAFSAVFTKYPESLVRVVQIIMVRLQRVTFLALHNYLGLTNELFSHEIQPLRLFPSPGLPTRTSPVRGSKRVVSTSGTEDTSKETSGRPLDSIGAPLPGPAGDPVKPTSLEAPPAPLLSRCISMPVDISGLQGGPRSDFDMAYERGRISVSLQEEASGGPQTASPRELREQPAGACEYSYCEDESATGGCPFGPYQGRQTSSIFEAAKRELAKLMRIEDPSLLNSRVLLHHAKAGTIIARQGDQDVSLHFVLWGCLHVYQRMIDKAEEVCLFVAQPGELVGQLAVLTGEPLIFTLRAQRDCTFLRISKSHFYEIMRAQPSVVLSAAHTVAARMSPFVRQMDFAIDWTAVEAGRALYRQGDRSDCTYIVLNGRLRSVIQRGSGKKELVGEYGRGDLIGVVEALTRQPRATTVHAVRDTELAKLPEGTLGHIKRRYPQVVTRLIHLLSQKILGNLQQLQGPFPGSGLSVPQHSELTNPASNLSTVAILPVCAEVPMMAFTLELQHALQAIGPTLLLNSDVIRALLGASALDSIQEFRLSGWLAQQEDAHRIVLYQTDTSLTPWTVRCLRQADCILIVGLGDQEPTVGQLEQMLENTAVRALKQLVLLHREEGPGPTRTVEWLNMRSWCSGHLHLRCPRRLFSRRSPAKLHELYEKVFSRRADRHSDFSRLARVLTGNTIALVLGGGGARGCSHIGVLKALEEAGVPVDLVGGTSIGSFIGALYAEERSASRTKQRAREWAKSMTSVLEPVLDLTYPVTSMFTGSAFNRSIHRVFQDKQIEDLWLPYFNVTTDITASAMRVHKDGSLWRYVRASMTLSGYLPPLCDPKDGHLLMDGGYINNLPADIARSMGAKTVIAIDVGSQDETDLSTYGDSLSGWWLLWKRLNPWADKVKVPDMAEIQSRLAYVSCVRQLEVVKSSSYCEYLRPSIDCFKTMDFGKFDQIYDVGYQYGKAVFGGWTRGEVIEKMLTDRRSTDLNESRRADILAFPSSGFTDLAEIVSRIEPPTSYVSDGCADGEESDCLTEYEEDAGPDCSRDEGGSPEGASPSTASEVEEEKSTLRQRRFLPQETPSSVADA</sequence>